<evidence type="ECO:0000255" key="1">
    <source>
        <dbReference type="HAMAP-Rule" id="MF_00278"/>
    </source>
</evidence>
<dbReference type="EC" id="4.3.2.10" evidence="1"/>
<dbReference type="EC" id="3.5.1.2" evidence="1"/>
<dbReference type="EMBL" id="CP000058">
    <property type="protein sequence ID" value="AAZ36024.1"/>
    <property type="molecule type" value="Genomic_DNA"/>
</dbReference>
<dbReference type="RefSeq" id="WP_002551455.1">
    <property type="nucleotide sequence ID" value="NC_005773.3"/>
</dbReference>
<dbReference type="SMR" id="Q48C78"/>
<dbReference type="KEGG" id="psp:PSPPH_4925"/>
<dbReference type="eggNOG" id="COG0118">
    <property type="taxonomic scope" value="Bacteria"/>
</dbReference>
<dbReference type="HOGENOM" id="CLU_071837_2_0_6"/>
<dbReference type="UniPathway" id="UPA00031">
    <property type="reaction ID" value="UER00010"/>
</dbReference>
<dbReference type="Proteomes" id="UP000000551">
    <property type="component" value="Chromosome"/>
</dbReference>
<dbReference type="GO" id="GO:0005737">
    <property type="term" value="C:cytoplasm"/>
    <property type="evidence" value="ECO:0007669"/>
    <property type="project" value="UniProtKB-SubCell"/>
</dbReference>
<dbReference type="GO" id="GO:0004359">
    <property type="term" value="F:glutaminase activity"/>
    <property type="evidence" value="ECO:0007669"/>
    <property type="project" value="UniProtKB-EC"/>
</dbReference>
<dbReference type="GO" id="GO:0000107">
    <property type="term" value="F:imidazoleglycerol-phosphate synthase activity"/>
    <property type="evidence" value="ECO:0007669"/>
    <property type="project" value="UniProtKB-UniRule"/>
</dbReference>
<dbReference type="GO" id="GO:0016829">
    <property type="term" value="F:lyase activity"/>
    <property type="evidence" value="ECO:0007669"/>
    <property type="project" value="UniProtKB-KW"/>
</dbReference>
<dbReference type="GO" id="GO:0000105">
    <property type="term" value="P:L-histidine biosynthetic process"/>
    <property type="evidence" value="ECO:0007669"/>
    <property type="project" value="UniProtKB-UniRule"/>
</dbReference>
<dbReference type="CDD" id="cd01748">
    <property type="entry name" value="GATase1_IGP_Synthase"/>
    <property type="match status" value="1"/>
</dbReference>
<dbReference type="FunFam" id="3.40.50.880:FF:000023">
    <property type="entry name" value="Imidazole glycerol phosphate synthase subunit HisH"/>
    <property type="match status" value="1"/>
</dbReference>
<dbReference type="Gene3D" id="3.40.50.880">
    <property type="match status" value="1"/>
</dbReference>
<dbReference type="HAMAP" id="MF_00278">
    <property type="entry name" value="HisH"/>
    <property type="match status" value="1"/>
</dbReference>
<dbReference type="InterPro" id="IPR029062">
    <property type="entry name" value="Class_I_gatase-like"/>
</dbReference>
<dbReference type="InterPro" id="IPR017926">
    <property type="entry name" value="GATASE"/>
</dbReference>
<dbReference type="InterPro" id="IPR010139">
    <property type="entry name" value="Imidazole-glycPsynth_HisH"/>
</dbReference>
<dbReference type="NCBIfam" id="TIGR01855">
    <property type="entry name" value="IMP_synth_hisH"/>
    <property type="match status" value="1"/>
</dbReference>
<dbReference type="PANTHER" id="PTHR42701">
    <property type="entry name" value="IMIDAZOLE GLYCEROL PHOSPHATE SYNTHASE SUBUNIT HISH"/>
    <property type="match status" value="1"/>
</dbReference>
<dbReference type="PANTHER" id="PTHR42701:SF2">
    <property type="entry name" value="IMIDAZOLE GLYCEROL PHOSPHATE SYNTHASE SUBUNIT HISH 1"/>
    <property type="match status" value="1"/>
</dbReference>
<dbReference type="Pfam" id="PF00117">
    <property type="entry name" value="GATase"/>
    <property type="match status" value="1"/>
</dbReference>
<dbReference type="PIRSF" id="PIRSF000495">
    <property type="entry name" value="Amidotransf_hisH"/>
    <property type="match status" value="1"/>
</dbReference>
<dbReference type="SUPFAM" id="SSF52317">
    <property type="entry name" value="Class I glutamine amidotransferase-like"/>
    <property type="match status" value="1"/>
</dbReference>
<dbReference type="PROSITE" id="PS51273">
    <property type="entry name" value="GATASE_TYPE_1"/>
    <property type="match status" value="1"/>
</dbReference>
<proteinExistence type="inferred from homology"/>
<sequence>MQTVAVIDYGMGNLHSVAKALEHVGAGRVLITSDAKVIREADRVVFPGVGAIRDCMAEIRRLGFDSLVREVSQDRPFLGICVGMQALLDRSEESGGVDCIGLFPGQVKFFGKDLYEEGEHLKVPHMGWNQVAQAVDHPLWHDIPDLARFYFVHSFYIDAANQRQVVGRGHYGLDFAAALADGSRFAVQFHPEKSHTHGLQLLQNFAAWDGRW</sequence>
<comment type="function">
    <text evidence="1">IGPS catalyzes the conversion of PRFAR and glutamine to IGP, AICAR and glutamate. The HisH subunit catalyzes the hydrolysis of glutamine to glutamate and ammonia as part of the synthesis of IGP and AICAR. The resulting ammonia molecule is channeled to the active site of HisF.</text>
</comment>
<comment type="catalytic activity">
    <reaction evidence="1">
        <text>5-[(5-phospho-1-deoxy-D-ribulos-1-ylimino)methylamino]-1-(5-phospho-beta-D-ribosyl)imidazole-4-carboxamide + L-glutamine = D-erythro-1-(imidazol-4-yl)glycerol 3-phosphate + 5-amino-1-(5-phospho-beta-D-ribosyl)imidazole-4-carboxamide + L-glutamate + H(+)</text>
        <dbReference type="Rhea" id="RHEA:24793"/>
        <dbReference type="ChEBI" id="CHEBI:15378"/>
        <dbReference type="ChEBI" id="CHEBI:29985"/>
        <dbReference type="ChEBI" id="CHEBI:58278"/>
        <dbReference type="ChEBI" id="CHEBI:58359"/>
        <dbReference type="ChEBI" id="CHEBI:58475"/>
        <dbReference type="ChEBI" id="CHEBI:58525"/>
        <dbReference type="EC" id="4.3.2.10"/>
    </reaction>
</comment>
<comment type="catalytic activity">
    <reaction evidence="1">
        <text>L-glutamine + H2O = L-glutamate + NH4(+)</text>
        <dbReference type="Rhea" id="RHEA:15889"/>
        <dbReference type="ChEBI" id="CHEBI:15377"/>
        <dbReference type="ChEBI" id="CHEBI:28938"/>
        <dbReference type="ChEBI" id="CHEBI:29985"/>
        <dbReference type="ChEBI" id="CHEBI:58359"/>
        <dbReference type="EC" id="3.5.1.2"/>
    </reaction>
</comment>
<comment type="pathway">
    <text evidence="1">Amino-acid biosynthesis; L-histidine biosynthesis; L-histidine from 5-phospho-alpha-D-ribose 1-diphosphate: step 5/9.</text>
</comment>
<comment type="subunit">
    <text evidence="1">Heterodimer of HisH and HisF.</text>
</comment>
<comment type="subcellular location">
    <subcellularLocation>
        <location evidence="1">Cytoplasm</location>
    </subcellularLocation>
</comment>
<organism>
    <name type="scientific">Pseudomonas savastanoi pv. phaseolicola (strain 1448A / Race 6)</name>
    <name type="common">Pseudomonas syringae pv. phaseolicola (strain 1448A / Race 6)</name>
    <dbReference type="NCBI Taxonomy" id="264730"/>
    <lineage>
        <taxon>Bacteria</taxon>
        <taxon>Pseudomonadati</taxon>
        <taxon>Pseudomonadota</taxon>
        <taxon>Gammaproteobacteria</taxon>
        <taxon>Pseudomonadales</taxon>
        <taxon>Pseudomonadaceae</taxon>
        <taxon>Pseudomonas</taxon>
    </lineage>
</organism>
<feature type="chain" id="PRO_0000231750" description="Imidazole glycerol phosphate synthase subunit HisH">
    <location>
        <begin position="1"/>
        <end position="212"/>
    </location>
</feature>
<feature type="domain" description="Glutamine amidotransferase type-1" evidence="1">
    <location>
        <begin position="3"/>
        <end position="212"/>
    </location>
</feature>
<feature type="active site" description="Nucleophile" evidence="1">
    <location>
        <position position="81"/>
    </location>
</feature>
<feature type="active site" evidence="1">
    <location>
        <position position="190"/>
    </location>
</feature>
<feature type="active site" evidence="1">
    <location>
        <position position="192"/>
    </location>
</feature>
<reference key="1">
    <citation type="journal article" date="2005" name="J. Bacteriol.">
        <title>Whole-genome sequence analysis of Pseudomonas syringae pv. phaseolicola 1448A reveals divergence among pathovars in genes involved in virulence and transposition.</title>
        <authorList>
            <person name="Joardar V."/>
            <person name="Lindeberg M."/>
            <person name="Jackson R.W."/>
            <person name="Selengut J."/>
            <person name="Dodson R."/>
            <person name="Brinkac L.M."/>
            <person name="Daugherty S.C."/>
            <person name="DeBoy R.T."/>
            <person name="Durkin A.S."/>
            <person name="Gwinn Giglio M."/>
            <person name="Madupu R."/>
            <person name="Nelson W.C."/>
            <person name="Rosovitz M.J."/>
            <person name="Sullivan S.A."/>
            <person name="Crabtree J."/>
            <person name="Creasy T."/>
            <person name="Davidsen T.M."/>
            <person name="Haft D.H."/>
            <person name="Zafar N."/>
            <person name="Zhou L."/>
            <person name="Halpin R."/>
            <person name="Holley T."/>
            <person name="Khouri H.M."/>
            <person name="Feldblyum T.V."/>
            <person name="White O."/>
            <person name="Fraser C.M."/>
            <person name="Chatterjee A.K."/>
            <person name="Cartinhour S."/>
            <person name="Schneider D."/>
            <person name="Mansfield J.W."/>
            <person name="Collmer A."/>
            <person name="Buell R."/>
        </authorList>
    </citation>
    <scope>NUCLEOTIDE SEQUENCE [LARGE SCALE GENOMIC DNA]</scope>
    <source>
        <strain>1448A / Race 6</strain>
    </source>
</reference>
<protein>
    <recommendedName>
        <fullName evidence="1">Imidazole glycerol phosphate synthase subunit HisH</fullName>
        <ecNumber evidence="1">4.3.2.10</ecNumber>
    </recommendedName>
    <alternativeName>
        <fullName evidence="1">IGP synthase glutaminase subunit</fullName>
        <ecNumber evidence="1">3.5.1.2</ecNumber>
    </alternativeName>
    <alternativeName>
        <fullName evidence="1">IGP synthase subunit HisH</fullName>
    </alternativeName>
    <alternativeName>
        <fullName evidence="1">ImGP synthase subunit HisH</fullName>
        <shortName evidence="1">IGPS subunit HisH</shortName>
    </alternativeName>
</protein>
<gene>
    <name evidence="1" type="primary">hisH</name>
    <name type="ordered locus">PSPPH_4925</name>
</gene>
<accession>Q48C78</accession>
<name>HIS5_PSE14</name>
<keyword id="KW-0028">Amino-acid biosynthesis</keyword>
<keyword id="KW-0963">Cytoplasm</keyword>
<keyword id="KW-0315">Glutamine amidotransferase</keyword>
<keyword id="KW-0368">Histidine biosynthesis</keyword>
<keyword id="KW-0378">Hydrolase</keyword>
<keyword id="KW-0456">Lyase</keyword>